<gene>
    <name evidence="1" type="primary">thrB</name>
    <name type="ordered locus">BR0476</name>
    <name type="ordered locus">BS1330_I0477</name>
</gene>
<comment type="catalytic activity">
    <reaction evidence="1">
        <text>L-homoserine + ATP = O-phospho-L-homoserine + ADP + H(+)</text>
        <dbReference type="Rhea" id="RHEA:13985"/>
        <dbReference type="ChEBI" id="CHEBI:15378"/>
        <dbReference type="ChEBI" id="CHEBI:30616"/>
        <dbReference type="ChEBI" id="CHEBI:57476"/>
        <dbReference type="ChEBI" id="CHEBI:57590"/>
        <dbReference type="ChEBI" id="CHEBI:456216"/>
        <dbReference type="EC" id="2.7.1.39"/>
    </reaction>
</comment>
<comment type="pathway">
    <text evidence="1">Amino-acid biosynthesis; L-threonine biosynthesis; L-threonine from L-aspartate: step 4/5.</text>
</comment>
<comment type="similarity">
    <text evidence="1">Belongs to the pseudomonas-type ThrB family.</text>
</comment>
<protein>
    <recommendedName>
        <fullName evidence="1">Homoserine kinase</fullName>
        <shortName evidence="1">HK</shortName>
        <shortName evidence="1">HSK</shortName>
        <ecNumber evidence="1">2.7.1.39</ecNumber>
    </recommendedName>
</protein>
<feature type="chain" id="PRO_0000172187" description="Homoserine kinase">
    <location>
        <begin position="1"/>
        <end position="326"/>
    </location>
</feature>
<reference key="1">
    <citation type="journal article" date="2002" name="Proc. Natl. Acad. Sci. U.S.A.">
        <title>The Brucella suis genome reveals fundamental similarities between animal and plant pathogens and symbionts.</title>
        <authorList>
            <person name="Paulsen I.T."/>
            <person name="Seshadri R."/>
            <person name="Nelson K.E."/>
            <person name="Eisen J.A."/>
            <person name="Heidelberg J.F."/>
            <person name="Read T.D."/>
            <person name="Dodson R.J."/>
            <person name="Umayam L.A."/>
            <person name="Brinkac L.M."/>
            <person name="Beanan M.J."/>
            <person name="Daugherty S.C."/>
            <person name="DeBoy R.T."/>
            <person name="Durkin A.S."/>
            <person name="Kolonay J.F."/>
            <person name="Madupu R."/>
            <person name="Nelson W.C."/>
            <person name="Ayodeji B."/>
            <person name="Kraul M."/>
            <person name="Shetty J."/>
            <person name="Malek J.A."/>
            <person name="Van Aken S.E."/>
            <person name="Riedmuller S."/>
            <person name="Tettelin H."/>
            <person name="Gill S.R."/>
            <person name="White O."/>
            <person name="Salzberg S.L."/>
            <person name="Hoover D.L."/>
            <person name="Lindler L.E."/>
            <person name="Halling S.M."/>
            <person name="Boyle S.M."/>
            <person name="Fraser C.M."/>
        </authorList>
    </citation>
    <scope>NUCLEOTIDE SEQUENCE [LARGE SCALE GENOMIC DNA]</scope>
    <source>
        <strain>1330</strain>
    </source>
</reference>
<reference key="2">
    <citation type="journal article" date="2011" name="J. Bacteriol.">
        <title>Revised genome sequence of Brucella suis 1330.</title>
        <authorList>
            <person name="Tae H."/>
            <person name="Shallom S."/>
            <person name="Settlage R."/>
            <person name="Preston D."/>
            <person name="Adams L.G."/>
            <person name="Garner H.R."/>
        </authorList>
    </citation>
    <scope>NUCLEOTIDE SEQUENCE [LARGE SCALE GENOMIC DNA]</scope>
    <source>
        <strain>1330</strain>
    </source>
</reference>
<dbReference type="EC" id="2.7.1.39" evidence="1"/>
<dbReference type="EMBL" id="AE014291">
    <property type="protein sequence ID" value="AAN29419.1"/>
    <property type="molecule type" value="Genomic_DNA"/>
</dbReference>
<dbReference type="EMBL" id="CP002997">
    <property type="protein sequence ID" value="AEM17832.1"/>
    <property type="molecule type" value="Genomic_DNA"/>
</dbReference>
<dbReference type="RefSeq" id="WP_004690619.1">
    <property type="nucleotide sequence ID" value="NZ_KN046804.1"/>
</dbReference>
<dbReference type="SMR" id="Q8G256"/>
<dbReference type="KEGG" id="bms:BR0476"/>
<dbReference type="KEGG" id="bsi:BS1330_I0477"/>
<dbReference type="PATRIC" id="fig|204722.22.peg.1368"/>
<dbReference type="HOGENOM" id="CLU_053300_1_0_5"/>
<dbReference type="PhylomeDB" id="Q8G256"/>
<dbReference type="UniPathway" id="UPA00050">
    <property type="reaction ID" value="UER00064"/>
</dbReference>
<dbReference type="Proteomes" id="UP000007104">
    <property type="component" value="Chromosome I"/>
</dbReference>
<dbReference type="GO" id="GO:0005524">
    <property type="term" value="F:ATP binding"/>
    <property type="evidence" value="ECO:0007669"/>
    <property type="project" value="UniProtKB-KW"/>
</dbReference>
<dbReference type="GO" id="GO:0004413">
    <property type="term" value="F:homoserine kinase activity"/>
    <property type="evidence" value="ECO:0007669"/>
    <property type="project" value="UniProtKB-UniRule"/>
</dbReference>
<dbReference type="GO" id="GO:0009088">
    <property type="term" value="P:threonine biosynthetic process"/>
    <property type="evidence" value="ECO:0007669"/>
    <property type="project" value="UniProtKB-UniRule"/>
</dbReference>
<dbReference type="CDD" id="cd05153">
    <property type="entry name" value="HomoserineK_II"/>
    <property type="match status" value="1"/>
</dbReference>
<dbReference type="Gene3D" id="3.90.1200.10">
    <property type="match status" value="1"/>
</dbReference>
<dbReference type="Gene3D" id="3.30.200.20">
    <property type="entry name" value="Phosphorylase Kinase, domain 1"/>
    <property type="match status" value="1"/>
</dbReference>
<dbReference type="HAMAP" id="MF_00301">
    <property type="entry name" value="Homoser_kinase_2"/>
    <property type="match status" value="1"/>
</dbReference>
<dbReference type="InterPro" id="IPR002575">
    <property type="entry name" value="Aminoglycoside_PTrfase"/>
</dbReference>
<dbReference type="InterPro" id="IPR005280">
    <property type="entry name" value="Homoserine_kinase_II"/>
</dbReference>
<dbReference type="InterPro" id="IPR011009">
    <property type="entry name" value="Kinase-like_dom_sf"/>
</dbReference>
<dbReference type="InterPro" id="IPR050249">
    <property type="entry name" value="Pseudomonas-type_ThrB"/>
</dbReference>
<dbReference type="NCBIfam" id="NF003558">
    <property type="entry name" value="PRK05231.1"/>
    <property type="match status" value="1"/>
</dbReference>
<dbReference type="NCBIfam" id="TIGR00938">
    <property type="entry name" value="thrB_alt"/>
    <property type="match status" value="1"/>
</dbReference>
<dbReference type="PANTHER" id="PTHR21064:SF6">
    <property type="entry name" value="AMINOGLYCOSIDE PHOSPHOTRANSFERASE DOMAIN-CONTAINING PROTEIN"/>
    <property type="match status" value="1"/>
</dbReference>
<dbReference type="PANTHER" id="PTHR21064">
    <property type="entry name" value="AMINOGLYCOSIDE PHOSPHOTRANSFERASE DOMAIN-CONTAINING PROTEIN-RELATED"/>
    <property type="match status" value="1"/>
</dbReference>
<dbReference type="Pfam" id="PF01636">
    <property type="entry name" value="APH"/>
    <property type="match status" value="1"/>
</dbReference>
<dbReference type="SUPFAM" id="SSF56112">
    <property type="entry name" value="Protein kinase-like (PK-like)"/>
    <property type="match status" value="1"/>
</dbReference>
<accession>Q8G256</accession>
<accession>G0K725</accession>
<keyword id="KW-0028">Amino-acid biosynthesis</keyword>
<keyword id="KW-0067">ATP-binding</keyword>
<keyword id="KW-0418">Kinase</keyword>
<keyword id="KW-0547">Nucleotide-binding</keyword>
<keyword id="KW-0791">Threonine biosynthesis</keyword>
<keyword id="KW-0808">Transferase</keyword>
<evidence type="ECO:0000255" key="1">
    <source>
        <dbReference type="HAMAP-Rule" id="MF_00301"/>
    </source>
</evidence>
<organism>
    <name type="scientific">Brucella suis biovar 1 (strain 1330)</name>
    <dbReference type="NCBI Taxonomy" id="204722"/>
    <lineage>
        <taxon>Bacteria</taxon>
        <taxon>Pseudomonadati</taxon>
        <taxon>Pseudomonadota</taxon>
        <taxon>Alphaproteobacteria</taxon>
        <taxon>Hyphomicrobiales</taxon>
        <taxon>Brucellaceae</taxon>
        <taxon>Brucella/Ochrobactrum group</taxon>
        <taxon>Brucella</taxon>
    </lineage>
</organism>
<sequence length="326" mass="36629">MAVYTDINEIELGAFLRHYDIGTLTSYKGIAEGVENSNYLLHTSSGSFILTLYEKRTNREDLPFFLGLMQHLAKRGLECPQPVVRNDGAMIGQLAGRPAAIVTFLEGMWMRRPTVAHCEAVGEGLAHMHLAGADFPMRRRNGLTLPDWRPLWNLSRKCADTVERGLVAETEADLDFLEKNWPADLPQGVIHADLFPDNAFFLGDRLSGFIDFYFACTDILAYDVAVCLNAWCFEKDFSYNRTKGAALLRGYTSVRPLSEAEADALPVLARGAAVRFMLTRLYDWLTVPAGSFVVKKDPMEYVRRMRFHRQIESAAEYGLEMQGVAA</sequence>
<name>KHSE_BRUSU</name>
<proteinExistence type="inferred from homology"/>